<name>MTNA_KOMPG</name>
<protein>
    <recommendedName>
        <fullName evidence="1">Methylthioribose-1-phosphate isomerase</fullName>
        <shortName evidence="1">M1Pi</shortName>
        <shortName evidence="1">MTR-1-P isomerase</shortName>
        <ecNumber evidence="1">5.3.1.23</ecNumber>
    </recommendedName>
    <alternativeName>
        <fullName evidence="1">S-methyl-5-thioribose-1-phosphate isomerase</fullName>
    </alternativeName>
    <alternativeName>
        <fullName evidence="1">Translation initiation factor eIF-2B subunit alpha/beta/delta-like protein</fullName>
    </alternativeName>
</protein>
<sequence length="411" mass="45460">MSLQAIKFDRQKTRLDILDQLLIPYQTKYIQVSNIDDGYSVIQKMQVRGAPAIAIVGSFSITCELNSVKDGQKNNHGYDVSDLSVFKAALEKRIDYLIKSRPTAVNLVNACTAIKAIVETACTIDDLYAEVLRYSVVLFEDDLKNNYRIGANGVRYIDNELSNFEGPFAVMTICNTGSLATSGHGTALGIIRSLWAKSKANPRNADDKTIQGQKSWLSHVYACETRPYNQGSRLTSYELNFEKIPFSLITDNMPAYLIDSLFSQRVNCPLPSRAPVKFIIVGADRIVTNGDLANKIGTFQLALIASQYDGVKFIGAAPTTTIDYTRDSGDDIVIEQRPANELTSILGGQVDSSDQFVTDSEGKVNLLRIKTATPNIDVWNPAFDVTPNRLIDSIVTEQDYLVKDSHGKFNL</sequence>
<proteinExistence type="inferred from homology"/>
<comment type="function">
    <text evidence="1">Catalyzes the interconversion of methylthioribose-1-phosphate (MTR-1-P) into methylthioribulose-1-phosphate (MTRu-1-P).</text>
</comment>
<comment type="catalytic activity">
    <reaction evidence="1">
        <text>5-(methylsulfanyl)-alpha-D-ribose 1-phosphate = 5-(methylsulfanyl)-D-ribulose 1-phosphate</text>
        <dbReference type="Rhea" id="RHEA:19989"/>
        <dbReference type="ChEBI" id="CHEBI:58533"/>
        <dbReference type="ChEBI" id="CHEBI:58548"/>
        <dbReference type="EC" id="5.3.1.23"/>
    </reaction>
</comment>
<comment type="pathway">
    <text evidence="1">Amino-acid biosynthesis; L-methionine biosynthesis via salvage pathway; L-methionine from S-methyl-5-thio-alpha-D-ribose 1-phosphate: step 1/6.</text>
</comment>
<comment type="subcellular location">
    <subcellularLocation>
        <location evidence="1">Cytoplasm</location>
    </subcellularLocation>
    <subcellularLocation>
        <location evidence="1">Nucleus</location>
    </subcellularLocation>
</comment>
<comment type="similarity">
    <text evidence="1">Belongs to the eIF-2B alpha/beta/delta subunits family. MtnA subfamily.</text>
</comment>
<feature type="chain" id="PRO_0000402042" description="Methylthioribose-1-phosphate isomerase">
    <location>
        <begin position="1"/>
        <end position="411"/>
    </location>
</feature>
<feature type="active site" description="Proton donor" evidence="1">
    <location>
        <position position="284"/>
    </location>
</feature>
<feature type="site" description="Transition state stabilizer" evidence="1">
    <location>
        <position position="174"/>
    </location>
</feature>
<gene>
    <name evidence="1" type="primary">MRI1</name>
    <name type="ordered locus">PAS_chr1-4_0545</name>
</gene>
<reference key="1">
    <citation type="journal article" date="2009" name="Nat. Biotechnol.">
        <title>Genome sequence of the recombinant protein production host Pichia pastoris.</title>
        <authorList>
            <person name="De Schutter K."/>
            <person name="Lin Y.-C."/>
            <person name="Tiels P."/>
            <person name="Van Hecke A."/>
            <person name="Glinka S."/>
            <person name="Weber-Lehmann J."/>
            <person name="Rouze P."/>
            <person name="Van de Peer Y."/>
            <person name="Callewaert N."/>
        </authorList>
    </citation>
    <scope>NUCLEOTIDE SEQUENCE [LARGE SCALE GENOMIC DNA]</scope>
    <source>
        <strain>GS115 / ATCC 20864</strain>
    </source>
</reference>
<keyword id="KW-0028">Amino-acid biosynthesis</keyword>
<keyword id="KW-0963">Cytoplasm</keyword>
<keyword id="KW-0413">Isomerase</keyword>
<keyword id="KW-0486">Methionine biosynthesis</keyword>
<keyword id="KW-0539">Nucleus</keyword>
<keyword id="KW-1185">Reference proteome</keyword>
<accession>C4QYS6</accession>
<organism>
    <name type="scientific">Komagataella phaffii (strain GS115 / ATCC 20864)</name>
    <name type="common">Yeast</name>
    <name type="synonym">Pichia pastoris</name>
    <dbReference type="NCBI Taxonomy" id="644223"/>
    <lineage>
        <taxon>Eukaryota</taxon>
        <taxon>Fungi</taxon>
        <taxon>Dikarya</taxon>
        <taxon>Ascomycota</taxon>
        <taxon>Saccharomycotina</taxon>
        <taxon>Pichiomycetes</taxon>
        <taxon>Pichiales</taxon>
        <taxon>Pichiaceae</taxon>
        <taxon>Komagataella</taxon>
    </lineage>
</organism>
<evidence type="ECO:0000255" key="1">
    <source>
        <dbReference type="HAMAP-Rule" id="MF_03119"/>
    </source>
</evidence>
<dbReference type="EC" id="5.3.1.23" evidence="1"/>
<dbReference type="EMBL" id="FN392319">
    <property type="protein sequence ID" value="CAY68400.1"/>
    <property type="molecule type" value="Genomic_DNA"/>
</dbReference>
<dbReference type="RefSeq" id="XP_002490680.1">
    <property type="nucleotide sequence ID" value="XM_002490635.1"/>
</dbReference>
<dbReference type="SMR" id="C4QYS6"/>
<dbReference type="FunCoup" id="C4QYS6">
    <property type="interactions" value="741"/>
</dbReference>
<dbReference type="STRING" id="644223.C4QYS6"/>
<dbReference type="EnsemblFungi" id="CAY68400">
    <property type="protein sequence ID" value="CAY68400"/>
    <property type="gene ID" value="PAS_chr1-4_0545"/>
</dbReference>
<dbReference type="GeneID" id="8197676"/>
<dbReference type="KEGG" id="ppa:PAS_chr1-4_0545"/>
<dbReference type="eggNOG" id="KOG1468">
    <property type="taxonomic scope" value="Eukaryota"/>
</dbReference>
<dbReference type="HOGENOM" id="CLU_016218_1_3_1"/>
<dbReference type="InParanoid" id="C4QYS6"/>
<dbReference type="OMA" id="CETRPLN"/>
<dbReference type="OrthoDB" id="2461at2759"/>
<dbReference type="UniPathway" id="UPA00904">
    <property type="reaction ID" value="UER00874"/>
</dbReference>
<dbReference type="Proteomes" id="UP000000314">
    <property type="component" value="Chromosome 1"/>
</dbReference>
<dbReference type="GO" id="GO:0005737">
    <property type="term" value="C:cytoplasm"/>
    <property type="evidence" value="ECO:0007669"/>
    <property type="project" value="UniProtKB-SubCell"/>
</dbReference>
<dbReference type="GO" id="GO:0005634">
    <property type="term" value="C:nucleus"/>
    <property type="evidence" value="ECO:0007669"/>
    <property type="project" value="UniProtKB-SubCell"/>
</dbReference>
<dbReference type="GO" id="GO:0046523">
    <property type="term" value="F:S-methyl-5-thioribose-1-phosphate isomerase activity"/>
    <property type="evidence" value="ECO:0007669"/>
    <property type="project" value="UniProtKB-UniRule"/>
</dbReference>
<dbReference type="GO" id="GO:0019509">
    <property type="term" value="P:L-methionine salvage from methylthioadenosine"/>
    <property type="evidence" value="ECO:0007669"/>
    <property type="project" value="UniProtKB-UniRule"/>
</dbReference>
<dbReference type="FunFam" id="1.20.120.420:FF:000003">
    <property type="entry name" value="Methylthioribose-1-phosphate isomerase"/>
    <property type="match status" value="1"/>
</dbReference>
<dbReference type="Gene3D" id="1.20.120.420">
    <property type="entry name" value="translation initiation factor eif-2b, domain 1"/>
    <property type="match status" value="1"/>
</dbReference>
<dbReference type="Gene3D" id="3.40.50.10470">
    <property type="entry name" value="Translation initiation factor eif-2b, domain 2"/>
    <property type="match status" value="1"/>
</dbReference>
<dbReference type="HAMAP" id="MF_01678">
    <property type="entry name" value="Salvage_MtnA"/>
    <property type="match status" value="1"/>
</dbReference>
<dbReference type="InterPro" id="IPR000649">
    <property type="entry name" value="IF-2B-related"/>
</dbReference>
<dbReference type="InterPro" id="IPR005251">
    <property type="entry name" value="IF-M1Pi"/>
</dbReference>
<dbReference type="InterPro" id="IPR042529">
    <property type="entry name" value="IF_2B-like_C"/>
</dbReference>
<dbReference type="InterPro" id="IPR011559">
    <property type="entry name" value="Initiation_fac_2B_a/b/d"/>
</dbReference>
<dbReference type="InterPro" id="IPR027363">
    <property type="entry name" value="M1Pi_N"/>
</dbReference>
<dbReference type="InterPro" id="IPR037171">
    <property type="entry name" value="NagB/RpiA_transferase-like"/>
</dbReference>
<dbReference type="NCBIfam" id="TIGR00524">
    <property type="entry name" value="eIF-2B_rel"/>
    <property type="match status" value="1"/>
</dbReference>
<dbReference type="NCBIfam" id="NF004326">
    <property type="entry name" value="PRK05720.1"/>
    <property type="match status" value="1"/>
</dbReference>
<dbReference type="NCBIfam" id="TIGR00512">
    <property type="entry name" value="salvage_mtnA"/>
    <property type="match status" value="1"/>
</dbReference>
<dbReference type="PANTHER" id="PTHR43475">
    <property type="entry name" value="METHYLTHIORIBOSE-1-PHOSPHATE ISOMERASE"/>
    <property type="match status" value="1"/>
</dbReference>
<dbReference type="PANTHER" id="PTHR43475:SF1">
    <property type="entry name" value="METHYLTHIORIBOSE-1-PHOSPHATE ISOMERASE"/>
    <property type="match status" value="1"/>
</dbReference>
<dbReference type="Pfam" id="PF01008">
    <property type="entry name" value="IF-2B"/>
    <property type="match status" value="1"/>
</dbReference>
<dbReference type="SUPFAM" id="SSF100950">
    <property type="entry name" value="NagB/RpiA/CoA transferase-like"/>
    <property type="match status" value="1"/>
</dbReference>